<accession>P86717</accession>
<accession>S4TZ61</accession>
<evidence type="ECO:0000250" key="1">
    <source>
        <dbReference type="UniProtKB" id="P86716"/>
    </source>
</evidence>
<evidence type="ECO:0000255" key="2"/>
<evidence type="ECO:0000255" key="3">
    <source>
        <dbReference type="PROSITE-ProRule" id="PRU01208"/>
    </source>
</evidence>
<evidence type="ECO:0000303" key="4">
    <source>
    </source>
</evidence>
<evidence type="ECO:0000305" key="5"/>
<evidence type="ECO:0000305" key="6">
    <source>
    </source>
</evidence>
<reference key="1">
    <citation type="journal article" date="2013" name="FEBS J.">
        <title>Spider toxins comprising disulfide-rich and linear amphipathic domains: A new class of molecules identified in the lynx spider Oxyopes takobius.</title>
        <authorList>
            <person name="Vassilevski A.A."/>
            <person name="Sachkova M.Y."/>
            <person name="Ignatova A.A."/>
            <person name="Kozlov S.A."/>
            <person name="Feofanov A.V."/>
            <person name="Grishin E.V."/>
        </authorList>
    </citation>
    <scope>NUCLEOTIDE SEQUENCE [MRNA]</scope>
    <source>
        <tissue>Venom gland</tissue>
    </source>
</reference>
<feature type="signal peptide" evidence="2">
    <location>
        <begin position="1"/>
        <end position="18"/>
    </location>
</feature>
<feature type="propeptide" id="PRO_0000425694" description="Removed in mature form" evidence="1">
    <location>
        <begin position="19"/>
        <end position="58"/>
    </location>
</feature>
<feature type="chain" id="PRO_0000425695" description="Spiderine-1b" evidence="1">
    <location>
        <begin position="59"/>
        <end position="166"/>
    </location>
</feature>
<feature type="domain" description="Oxytoxin-type inhibitor cystine knot (ICK)" evidence="3">
    <location>
        <begin position="113"/>
        <end position="166"/>
    </location>
</feature>
<feature type="region of interest" description="Linear cationic cytotoxin domain" evidence="1">
    <location>
        <begin position="59"/>
        <end position="99"/>
    </location>
</feature>
<feature type="disulfide bond" evidence="1">
    <location>
        <begin position="116"/>
        <end position="130"/>
    </location>
</feature>
<feature type="disulfide bond" evidence="1">
    <location>
        <begin position="123"/>
        <end position="135"/>
    </location>
</feature>
<feature type="disulfide bond" evidence="1">
    <location>
        <begin position="127"/>
        <end position="162"/>
    </location>
</feature>
<feature type="disulfide bond" evidence="1">
    <location>
        <begin position="129"/>
        <end position="151"/>
    </location>
</feature>
<feature type="disulfide bond" evidence="1">
    <location>
        <begin position="137"/>
        <end position="149"/>
    </location>
</feature>
<sequence>MKFALVLLGICAFYLVNATGDLETELEASELQELQEALDLIGETSLESLEAEELEEARKFKWGKLFSAAKKLYKKGKKLSKNKNFKKALKFGKQLAKNLQAGEEHEPGTPVGNNKCWAIGTTCSDDCDCCPEHHCHCPAGKWLPGLFRCTCQVTESDKVNKCPPAE</sequence>
<protein>
    <recommendedName>
        <fullName evidence="4">Spiderine-1b</fullName>
    </recommendedName>
    <alternativeName>
        <fullName evidence="5">M-oxotoxin-Ot3b</fullName>
        <shortName evidence="5">M-OXTX-Ot3b</shortName>
    </alternativeName>
    <alternativeName>
        <fullName evidence="4">OtTx1b</fullName>
    </alternativeName>
</protein>
<dbReference type="EMBL" id="JX134894">
    <property type="protein sequence ID" value="AGG39773.1"/>
    <property type="molecule type" value="mRNA"/>
</dbReference>
<dbReference type="SMR" id="P86717"/>
<dbReference type="ArachnoServer" id="AS001939">
    <property type="toxin name" value="M-oxotoxin-Ot3b"/>
</dbReference>
<dbReference type="GO" id="GO:0005576">
    <property type="term" value="C:extracellular region"/>
    <property type="evidence" value="ECO:0007669"/>
    <property type="project" value="UniProtKB-SubCell"/>
</dbReference>
<dbReference type="GO" id="GO:0090729">
    <property type="term" value="F:toxin activity"/>
    <property type="evidence" value="ECO:0007669"/>
    <property type="project" value="UniProtKB-KW"/>
</dbReference>
<dbReference type="GO" id="GO:0042742">
    <property type="term" value="P:defense response to bacterium"/>
    <property type="evidence" value="ECO:0007669"/>
    <property type="project" value="UniProtKB-KW"/>
</dbReference>
<dbReference type="GO" id="GO:0031640">
    <property type="term" value="P:killing of cells of another organism"/>
    <property type="evidence" value="ECO:0007669"/>
    <property type="project" value="UniProtKB-KW"/>
</dbReference>
<dbReference type="InterPro" id="IPR044061">
    <property type="entry name" value="OXYTX_ICK"/>
</dbReference>
<dbReference type="PROSITE" id="PS51861">
    <property type="entry name" value="OXYTX_ICK"/>
    <property type="match status" value="1"/>
</dbReference>
<name>SPN1B_OXYTA</name>
<comment type="function">
    <text evidence="1">Has antimicrobial, insecticidal, cytolytic and cytotoxic activity.</text>
</comment>
<comment type="subcellular location">
    <subcellularLocation>
        <location evidence="1">Secreted</location>
    </subcellularLocation>
</comment>
<comment type="tissue specificity">
    <text evidence="6">Expressed by the venom gland.</text>
</comment>
<comment type="domain">
    <text evidence="1">The presence of a 'disulfide through disulfide knot' structurally defines this protein as a knottin.</text>
</comment>
<comment type="domain">
    <text evidence="1">The N-terminal part of the mature protein (59-100) probably forms an alpha-helix which acts as a membrane-active peptide. It is necessary and sufficient for the toxin's antimicrobial, insecticidal, cytolytic and cytotoxic activity.</text>
</comment>
<comment type="similarity">
    <text evidence="5">Belongs to the spiderine family. Cationic/spiderine subfamily.</text>
</comment>
<organism>
    <name type="scientific">Oxyopes takobius</name>
    <name type="common">Lynx spider</name>
    <name type="synonym">Oxyopes foliiformis</name>
    <dbReference type="NCBI Taxonomy" id="666126"/>
    <lineage>
        <taxon>Eukaryota</taxon>
        <taxon>Metazoa</taxon>
        <taxon>Ecdysozoa</taxon>
        <taxon>Arthropoda</taxon>
        <taxon>Chelicerata</taxon>
        <taxon>Arachnida</taxon>
        <taxon>Araneae</taxon>
        <taxon>Araneomorphae</taxon>
        <taxon>Entelegynae</taxon>
        <taxon>Lycosoidea</taxon>
        <taxon>Oxyopidae</taxon>
        <taxon>Oxyopes</taxon>
    </lineage>
</organism>
<keyword id="KW-0044">Antibiotic</keyword>
<keyword id="KW-0929">Antimicrobial</keyword>
<keyword id="KW-0204">Cytolysis</keyword>
<keyword id="KW-1015">Disulfide bond</keyword>
<keyword id="KW-0960">Knottin</keyword>
<keyword id="KW-0964">Secreted</keyword>
<keyword id="KW-0732">Signal</keyword>
<keyword id="KW-0800">Toxin</keyword>
<proteinExistence type="evidence at transcript level"/>